<sequence length="492" mass="55091">MYVLAIDQSTSGTKAIIFDEKGGIVHRVTVYHKQYYPKPGWVEHDPEEIFRNTLDACRKVIEESGIKPLEIEALAITNQRETTILWEKKSGKPVYNAVVWQCQRGASLCEEIKKRGLEGKIKEKTGLVVDPYFSASKIRWILDNVEGVKNKAKQGEIAFGTVDSWLIWKLTKGEVHATDFSNASRTLLLNIHELRWDEEVLEIFEIPPEILPELKSSDSVFGYTDLGFLPKKIPIVGVMGDSSAALFGQGGFYSGDIKVTYGTGSSTMLNIGEKPNVSDSPIVCSVGWVVKETSSYVLEGNIHSAGDTIVWLKEKLGIISDPSETEKIALSLENNGGVYLVPAFVGLGAPYWRSDVKAAILGLQRNHGKEHVVRAALESIAYQVRDIFEEMVRISSKEPTEVRADGGITRNRFLMQFQADILNIPVLVSNIEEVSARGVAFVALLHLGAFSDLEEIRQKITYREKYEPRMGDELREMYYEGWKTAIRKLLTE</sequence>
<name>GLPK1_THEMA</name>
<dbReference type="EC" id="2.7.1.30" evidence="1"/>
<dbReference type="EMBL" id="AE000512">
    <property type="protein sequence ID" value="AAD36033.1"/>
    <property type="molecule type" value="Genomic_DNA"/>
</dbReference>
<dbReference type="PIR" id="C72314">
    <property type="entry name" value="C72314"/>
</dbReference>
<dbReference type="RefSeq" id="NP_228760.1">
    <property type="nucleotide sequence ID" value="NC_000853.1"/>
</dbReference>
<dbReference type="SMR" id="Q9X049"/>
<dbReference type="STRING" id="243274.TM_0952"/>
<dbReference type="PaxDb" id="243274-THEMA_09585"/>
<dbReference type="EnsemblBacteria" id="AAD36033">
    <property type="protein sequence ID" value="AAD36033"/>
    <property type="gene ID" value="TM_0952"/>
</dbReference>
<dbReference type="KEGG" id="tma:TM0952"/>
<dbReference type="KEGG" id="tmi:THEMA_09585"/>
<dbReference type="KEGG" id="tmm:Tmari_0954"/>
<dbReference type="KEGG" id="tmw:THMA_0975"/>
<dbReference type="eggNOG" id="COG0554">
    <property type="taxonomic scope" value="Bacteria"/>
</dbReference>
<dbReference type="InParanoid" id="Q9X049"/>
<dbReference type="OrthoDB" id="9805576at2"/>
<dbReference type="UniPathway" id="UPA00618">
    <property type="reaction ID" value="UER00672"/>
</dbReference>
<dbReference type="Proteomes" id="UP000008183">
    <property type="component" value="Chromosome"/>
</dbReference>
<dbReference type="GO" id="GO:0005829">
    <property type="term" value="C:cytosol"/>
    <property type="evidence" value="ECO:0000318"/>
    <property type="project" value="GO_Central"/>
</dbReference>
<dbReference type="GO" id="GO:0005524">
    <property type="term" value="F:ATP binding"/>
    <property type="evidence" value="ECO:0007669"/>
    <property type="project" value="UniProtKB-UniRule"/>
</dbReference>
<dbReference type="GO" id="GO:0004370">
    <property type="term" value="F:glycerol kinase activity"/>
    <property type="evidence" value="ECO:0000250"/>
    <property type="project" value="UniProtKB"/>
</dbReference>
<dbReference type="GO" id="GO:0019563">
    <property type="term" value="P:glycerol catabolic process"/>
    <property type="evidence" value="ECO:0000318"/>
    <property type="project" value="GO_Central"/>
</dbReference>
<dbReference type="GO" id="GO:0006071">
    <property type="term" value="P:glycerol metabolic process"/>
    <property type="evidence" value="ECO:0000250"/>
    <property type="project" value="UniProtKB"/>
</dbReference>
<dbReference type="GO" id="GO:0006072">
    <property type="term" value="P:glycerol-3-phosphate metabolic process"/>
    <property type="evidence" value="ECO:0007669"/>
    <property type="project" value="InterPro"/>
</dbReference>
<dbReference type="CDD" id="cd07769">
    <property type="entry name" value="ASKHA_NBD_FGGY_GK"/>
    <property type="match status" value="1"/>
</dbReference>
<dbReference type="FunFam" id="3.30.420.40:FF:000008">
    <property type="entry name" value="Glycerol kinase"/>
    <property type="match status" value="1"/>
</dbReference>
<dbReference type="Gene3D" id="3.30.420.40">
    <property type="match status" value="2"/>
</dbReference>
<dbReference type="HAMAP" id="MF_00186">
    <property type="entry name" value="Glycerol_kin"/>
    <property type="match status" value="1"/>
</dbReference>
<dbReference type="InterPro" id="IPR043129">
    <property type="entry name" value="ATPase_NBD"/>
</dbReference>
<dbReference type="InterPro" id="IPR000577">
    <property type="entry name" value="Carb_kinase_FGGY"/>
</dbReference>
<dbReference type="InterPro" id="IPR018483">
    <property type="entry name" value="Carb_kinase_FGGY_CS"/>
</dbReference>
<dbReference type="InterPro" id="IPR018485">
    <property type="entry name" value="FGGY_C"/>
</dbReference>
<dbReference type="InterPro" id="IPR018484">
    <property type="entry name" value="FGGY_N"/>
</dbReference>
<dbReference type="InterPro" id="IPR005999">
    <property type="entry name" value="Glycerol_kin"/>
</dbReference>
<dbReference type="NCBIfam" id="TIGR01311">
    <property type="entry name" value="glycerol_kin"/>
    <property type="match status" value="1"/>
</dbReference>
<dbReference type="NCBIfam" id="NF000756">
    <property type="entry name" value="PRK00047.1"/>
    <property type="match status" value="1"/>
</dbReference>
<dbReference type="PANTHER" id="PTHR10196:SF69">
    <property type="entry name" value="GLYCEROL KINASE"/>
    <property type="match status" value="1"/>
</dbReference>
<dbReference type="PANTHER" id="PTHR10196">
    <property type="entry name" value="SUGAR KINASE"/>
    <property type="match status" value="1"/>
</dbReference>
<dbReference type="Pfam" id="PF02782">
    <property type="entry name" value="FGGY_C"/>
    <property type="match status" value="1"/>
</dbReference>
<dbReference type="Pfam" id="PF00370">
    <property type="entry name" value="FGGY_N"/>
    <property type="match status" value="1"/>
</dbReference>
<dbReference type="PIRSF" id="PIRSF000538">
    <property type="entry name" value="GlpK"/>
    <property type="match status" value="1"/>
</dbReference>
<dbReference type="SUPFAM" id="SSF53067">
    <property type="entry name" value="Actin-like ATPase domain"/>
    <property type="match status" value="2"/>
</dbReference>
<dbReference type="PROSITE" id="PS00933">
    <property type="entry name" value="FGGY_KINASES_1"/>
    <property type="match status" value="1"/>
</dbReference>
<dbReference type="PROSITE" id="PS00445">
    <property type="entry name" value="FGGY_KINASES_2"/>
    <property type="match status" value="1"/>
</dbReference>
<gene>
    <name evidence="1" type="primary">glpK1</name>
    <name type="ordered locus">TM_0952</name>
</gene>
<keyword id="KW-0067">ATP-binding</keyword>
<keyword id="KW-0319">Glycerol metabolism</keyword>
<keyword id="KW-0418">Kinase</keyword>
<keyword id="KW-0547">Nucleotide-binding</keyword>
<keyword id="KW-1185">Reference proteome</keyword>
<keyword id="KW-0808">Transferase</keyword>
<reference key="1">
    <citation type="journal article" date="1999" name="Nature">
        <title>Evidence for lateral gene transfer between Archaea and Bacteria from genome sequence of Thermotoga maritima.</title>
        <authorList>
            <person name="Nelson K.E."/>
            <person name="Clayton R.A."/>
            <person name="Gill S.R."/>
            <person name="Gwinn M.L."/>
            <person name="Dodson R.J."/>
            <person name="Haft D.H."/>
            <person name="Hickey E.K."/>
            <person name="Peterson J.D."/>
            <person name="Nelson W.C."/>
            <person name="Ketchum K.A."/>
            <person name="McDonald L.A."/>
            <person name="Utterback T.R."/>
            <person name="Malek J.A."/>
            <person name="Linher K.D."/>
            <person name="Garrett M.M."/>
            <person name="Stewart A.M."/>
            <person name="Cotton M.D."/>
            <person name="Pratt M.S."/>
            <person name="Phillips C.A."/>
            <person name="Richardson D.L."/>
            <person name="Heidelberg J.F."/>
            <person name="Sutton G.G."/>
            <person name="Fleischmann R.D."/>
            <person name="Eisen J.A."/>
            <person name="White O."/>
            <person name="Salzberg S.L."/>
            <person name="Smith H.O."/>
            <person name="Venter J.C."/>
            <person name="Fraser C.M."/>
        </authorList>
    </citation>
    <scope>NUCLEOTIDE SEQUENCE [LARGE SCALE GENOMIC DNA]</scope>
    <source>
        <strain>ATCC 43589 / DSM 3109 / JCM 10099 / NBRC 100826 / MSB8</strain>
    </source>
</reference>
<comment type="function">
    <text evidence="1">Key enzyme in the regulation of glycerol uptake and metabolism. Catalyzes the phosphorylation of glycerol to yield sn-glycerol 3-phosphate.</text>
</comment>
<comment type="catalytic activity">
    <reaction evidence="1">
        <text>glycerol + ATP = sn-glycerol 3-phosphate + ADP + H(+)</text>
        <dbReference type="Rhea" id="RHEA:21644"/>
        <dbReference type="ChEBI" id="CHEBI:15378"/>
        <dbReference type="ChEBI" id="CHEBI:17754"/>
        <dbReference type="ChEBI" id="CHEBI:30616"/>
        <dbReference type="ChEBI" id="CHEBI:57597"/>
        <dbReference type="ChEBI" id="CHEBI:456216"/>
        <dbReference type="EC" id="2.7.1.30"/>
    </reaction>
</comment>
<comment type="activity regulation">
    <text evidence="1">Inhibited by fructose 1,6-bisphosphate (FBP).</text>
</comment>
<comment type="pathway">
    <text evidence="1">Polyol metabolism; glycerol degradation via glycerol kinase pathway; sn-glycerol 3-phosphate from glycerol: step 1/1.</text>
</comment>
<comment type="similarity">
    <text evidence="1">Belongs to the FGGY kinase family.</text>
</comment>
<evidence type="ECO:0000255" key="1">
    <source>
        <dbReference type="HAMAP-Rule" id="MF_00186"/>
    </source>
</evidence>
<protein>
    <recommendedName>
        <fullName evidence="1">Glycerol kinase 1</fullName>
        <ecNumber evidence="1">2.7.1.30</ecNumber>
    </recommendedName>
    <alternativeName>
        <fullName evidence="1">ATP:glycerol 3-phosphotransferase 1</fullName>
    </alternativeName>
    <alternativeName>
        <fullName evidence="1">Glycerokinase 1</fullName>
        <shortName evidence="1">GK 1</shortName>
    </alternativeName>
</protein>
<accession>Q9X049</accession>
<proteinExistence type="inferred from homology"/>
<feature type="chain" id="PRO_0000059513" description="Glycerol kinase 1">
    <location>
        <begin position="1"/>
        <end position="492"/>
    </location>
</feature>
<feature type="binding site" evidence="1">
    <location>
        <position position="10"/>
    </location>
    <ligand>
        <name>ADP</name>
        <dbReference type="ChEBI" id="CHEBI:456216"/>
    </ligand>
</feature>
<feature type="binding site" evidence="1">
    <location>
        <position position="10"/>
    </location>
    <ligand>
        <name>ATP</name>
        <dbReference type="ChEBI" id="CHEBI:30616"/>
    </ligand>
</feature>
<feature type="binding site" evidence="1">
    <location>
        <position position="10"/>
    </location>
    <ligand>
        <name>sn-glycerol 3-phosphate</name>
        <dbReference type="ChEBI" id="CHEBI:57597"/>
    </ligand>
</feature>
<feature type="binding site" evidence="1">
    <location>
        <position position="11"/>
    </location>
    <ligand>
        <name>ATP</name>
        <dbReference type="ChEBI" id="CHEBI:30616"/>
    </ligand>
</feature>
<feature type="binding site" evidence="1">
    <location>
        <position position="14"/>
    </location>
    <ligand>
        <name>ADP</name>
        <dbReference type="ChEBI" id="CHEBI:456216"/>
    </ligand>
</feature>
<feature type="binding site" evidence="1">
    <location>
        <position position="80"/>
    </location>
    <ligand>
        <name>glycerol</name>
        <dbReference type="ChEBI" id="CHEBI:17754"/>
    </ligand>
</feature>
<feature type="binding site" evidence="1">
    <location>
        <position position="80"/>
    </location>
    <ligand>
        <name>sn-glycerol 3-phosphate</name>
        <dbReference type="ChEBI" id="CHEBI:57597"/>
    </ligand>
</feature>
<feature type="binding site" evidence="1">
    <location>
        <position position="81"/>
    </location>
    <ligand>
        <name>glycerol</name>
        <dbReference type="ChEBI" id="CHEBI:17754"/>
    </ligand>
</feature>
<feature type="binding site" evidence="1">
    <location>
        <position position="81"/>
    </location>
    <ligand>
        <name>sn-glycerol 3-phosphate</name>
        <dbReference type="ChEBI" id="CHEBI:57597"/>
    </ligand>
</feature>
<feature type="binding site" evidence="1">
    <location>
        <position position="132"/>
    </location>
    <ligand>
        <name>glycerol</name>
        <dbReference type="ChEBI" id="CHEBI:17754"/>
    </ligand>
</feature>
<feature type="binding site" evidence="1">
    <location>
        <position position="132"/>
    </location>
    <ligand>
        <name>sn-glycerol 3-phosphate</name>
        <dbReference type="ChEBI" id="CHEBI:57597"/>
    </ligand>
</feature>
<feature type="binding site" evidence="1">
    <location>
        <position position="241"/>
    </location>
    <ligand>
        <name>glycerol</name>
        <dbReference type="ChEBI" id="CHEBI:17754"/>
    </ligand>
</feature>
<feature type="binding site" evidence="1">
    <location>
        <position position="241"/>
    </location>
    <ligand>
        <name>sn-glycerol 3-phosphate</name>
        <dbReference type="ChEBI" id="CHEBI:57597"/>
    </ligand>
</feature>
<feature type="binding site" evidence="1">
    <location>
        <position position="263"/>
    </location>
    <ligand>
        <name>ADP</name>
        <dbReference type="ChEBI" id="CHEBI:456216"/>
    </ligand>
</feature>
<feature type="binding site" evidence="1">
    <location>
        <position position="263"/>
    </location>
    <ligand>
        <name>ATP</name>
        <dbReference type="ChEBI" id="CHEBI:30616"/>
    </ligand>
</feature>
<feature type="binding site" evidence="1">
    <location>
        <position position="306"/>
    </location>
    <ligand>
        <name>ADP</name>
        <dbReference type="ChEBI" id="CHEBI:456216"/>
    </ligand>
</feature>
<feature type="binding site" evidence="1">
    <location>
        <position position="306"/>
    </location>
    <ligand>
        <name>ATP</name>
        <dbReference type="ChEBI" id="CHEBI:30616"/>
    </ligand>
</feature>
<feature type="binding site" evidence="1">
    <location>
        <position position="407"/>
    </location>
    <ligand>
        <name>ADP</name>
        <dbReference type="ChEBI" id="CHEBI:456216"/>
    </ligand>
</feature>
<feature type="binding site" evidence="1">
    <location>
        <position position="407"/>
    </location>
    <ligand>
        <name>ATP</name>
        <dbReference type="ChEBI" id="CHEBI:30616"/>
    </ligand>
</feature>
<feature type="binding site" evidence="1">
    <location>
        <position position="411"/>
    </location>
    <ligand>
        <name>ADP</name>
        <dbReference type="ChEBI" id="CHEBI:456216"/>
    </ligand>
</feature>
<organism>
    <name type="scientific">Thermotoga maritima (strain ATCC 43589 / DSM 3109 / JCM 10099 / NBRC 100826 / MSB8)</name>
    <dbReference type="NCBI Taxonomy" id="243274"/>
    <lineage>
        <taxon>Bacteria</taxon>
        <taxon>Thermotogati</taxon>
        <taxon>Thermotogota</taxon>
        <taxon>Thermotogae</taxon>
        <taxon>Thermotogales</taxon>
        <taxon>Thermotogaceae</taxon>
        <taxon>Thermotoga</taxon>
    </lineage>
</organism>